<dbReference type="EC" id="6.3.4.2" evidence="1"/>
<dbReference type="EMBL" id="AE015928">
    <property type="protein sequence ID" value="AAO75697.1"/>
    <property type="molecule type" value="Genomic_DNA"/>
</dbReference>
<dbReference type="RefSeq" id="NP_809503.1">
    <property type="nucleotide sequence ID" value="NC_004663.1"/>
</dbReference>
<dbReference type="RefSeq" id="WP_008763175.1">
    <property type="nucleotide sequence ID" value="NZ_UYXG01000009.1"/>
</dbReference>
<dbReference type="SMR" id="Q8AA75"/>
<dbReference type="FunCoup" id="Q8AA75">
    <property type="interactions" value="447"/>
</dbReference>
<dbReference type="STRING" id="226186.BT_0590"/>
<dbReference type="PaxDb" id="226186-BT_0590"/>
<dbReference type="EnsemblBacteria" id="AAO75697">
    <property type="protein sequence ID" value="AAO75697"/>
    <property type="gene ID" value="BT_0590"/>
</dbReference>
<dbReference type="KEGG" id="bth:BT_0590"/>
<dbReference type="PATRIC" id="fig|226186.12.peg.592"/>
<dbReference type="eggNOG" id="COG0504">
    <property type="taxonomic scope" value="Bacteria"/>
</dbReference>
<dbReference type="HOGENOM" id="CLU_011675_5_0_10"/>
<dbReference type="InParanoid" id="Q8AA75"/>
<dbReference type="OrthoDB" id="9801107at2"/>
<dbReference type="UniPathway" id="UPA00159">
    <property type="reaction ID" value="UER00277"/>
</dbReference>
<dbReference type="Proteomes" id="UP000001414">
    <property type="component" value="Chromosome"/>
</dbReference>
<dbReference type="GO" id="GO:0005829">
    <property type="term" value="C:cytosol"/>
    <property type="evidence" value="ECO:0000318"/>
    <property type="project" value="GO_Central"/>
</dbReference>
<dbReference type="GO" id="GO:0005524">
    <property type="term" value="F:ATP binding"/>
    <property type="evidence" value="ECO:0007669"/>
    <property type="project" value="UniProtKB-KW"/>
</dbReference>
<dbReference type="GO" id="GO:0003883">
    <property type="term" value="F:CTP synthase activity"/>
    <property type="evidence" value="ECO:0000318"/>
    <property type="project" value="GO_Central"/>
</dbReference>
<dbReference type="GO" id="GO:0004359">
    <property type="term" value="F:glutaminase activity"/>
    <property type="evidence" value="ECO:0007669"/>
    <property type="project" value="RHEA"/>
</dbReference>
<dbReference type="GO" id="GO:0042802">
    <property type="term" value="F:identical protein binding"/>
    <property type="evidence" value="ECO:0000318"/>
    <property type="project" value="GO_Central"/>
</dbReference>
<dbReference type="GO" id="GO:0046872">
    <property type="term" value="F:metal ion binding"/>
    <property type="evidence" value="ECO:0007669"/>
    <property type="project" value="UniProtKB-KW"/>
</dbReference>
<dbReference type="GO" id="GO:0044210">
    <property type="term" value="P:'de novo' CTP biosynthetic process"/>
    <property type="evidence" value="ECO:0007669"/>
    <property type="project" value="UniProtKB-UniRule"/>
</dbReference>
<dbReference type="GO" id="GO:0006241">
    <property type="term" value="P:CTP biosynthetic process"/>
    <property type="evidence" value="ECO:0000318"/>
    <property type="project" value="GO_Central"/>
</dbReference>
<dbReference type="GO" id="GO:0019856">
    <property type="term" value="P:pyrimidine nucleobase biosynthetic process"/>
    <property type="evidence" value="ECO:0000318"/>
    <property type="project" value="GO_Central"/>
</dbReference>
<dbReference type="CDD" id="cd03113">
    <property type="entry name" value="CTPS_N"/>
    <property type="match status" value="1"/>
</dbReference>
<dbReference type="CDD" id="cd01746">
    <property type="entry name" value="GATase1_CTP_Synthase"/>
    <property type="match status" value="1"/>
</dbReference>
<dbReference type="FunFam" id="3.40.50.300:FF:000009">
    <property type="entry name" value="CTP synthase"/>
    <property type="match status" value="1"/>
</dbReference>
<dbReference type="FunFam" id="3.40.50.880:FF:000002">
    <property type="entry name" value="CTP synthase"/>
    <property type="match status" value="1"/>
</dbReference>
<dbReference type="Gene3D" id="3.40.50.880">
    <property type="match status" value="1"/>
</dbReference>
<dbReference type="Gene3D" id="3.40.50.300">
    <property type="entry name" value="P-loop containing nucleotide triphosphate hydrolases"/>
    <property type="match status" value="1"/>
</dbReference>
<dbReference type="HAMAP" id="MF_01227">
    <property type="entry name" value="PyrG"/>
    <property type="match status" value="1"/>
</dbReference>
<dbReference type="InterPro" id="IPR029062">
    <property type="entry name" value="Class_I_gatase-like"/>
</dbReference>
<dbReference type="InterPro" id="IPR004468">
    <property type="entry name" value="CTP_synthase"/>
</dbReference>
<dbReference type="InterPro" id="IPR017456">
    <property type="entry name" value="CTP_synthase_N"/>
</dbReference>
<dbReference type="InterPro" id="IPR017926">
    <property type="entry name" value="GATASE"/>
</dbReference>
<dbReference type="InterPro" id="IPR033828">
    <property type="entry name" value="GATase1_CTP_Synthase"/>
</dbReference>
<dbReference type="InterPro" id="IPR027417">
    <property type="entry name" value="P-loop_NTPase"/>
</dbReference>
<dbReference type="NCBIfam" id="NF003792">
    <property type="entry name" value="PRK05380.1"/>
    <property type="match status" value="1"/>
</dbReference>
<dbReference type="NCBIfam" id="TIGR00337">
    <property type="entry name" value="PyrG"/>
    <property type="match status" value="1"/>
</dbReference>
<dbReference type="PANTHER" id="PTHR11550">
    <property type="entry name" value="CTP SYNTHASE"/>
    <property type="match status" value="1"/>
</dbReference>
<dbReference type="PANTHER" id="PTHR11550:SF0">
    <property type="entry name" value="CTP SYNTHASE-RELATED"/>
    <property type="match status" value="1"/>
</dbReference>
<dbReference type="Pfam" id="PF06418">
    <property type="entry name" value="CTP_synth_N"/>
    <property type="match status" value="1"/>
</dbReference>
<dbReference type="Pfam" id="PF00117">
    <property type="entry name" value="GATase"/>
    <property type="match status" value="1"/>
</dbReference>
<dbReference type="SUPFAM" id="SSF52317">
    <property type="entry name" value="Class I glutamine amidotransferase-like"/>
    <property type="match status" value="1"/>
</dbReference>
<dbReference type="SUPFAM" id="SSF52540">
    <property type="entry name" value="P-loop containing nucleoside triphosphate hydrolases"/>
    <property type="match status" value="1"/>
</dbReference>
<dbReference type="PROSITE" id="PS51273">
    <property type="entry name" value="GATASE_TYPE_1"/>
    <property type="match status" value="1"/>
</dbReference>
<accession>Q8AA75</accession>
<reference key="1">
    <citation type="journal article" date="2003" name="Science">
        <title>A genomic view of the human-Bacteroides thetaiotaomicron symbiosis.</title>
        <authorList>
            <person name="Xu J."/>
            <person name="Bjursell M.K."/>
            <person name="Himrod J."/>
            <person name="Deng S."/>
            <person name="Carmichael L.K."/>
            <person name="Chiang H.C."/>
            <person name="Hooper L.V."/>
            <person name="Gordon J.I."/>
        </authorList>
    </citation>
    <scope>NUCLEOTIDE SEQUENCE [LARGE SCALE GENOMIC DNA]</scope>
    <source>
        <strain>ATCC 29148 / DSM 2079 / JCM 5827 / CCUG 10774 / NCTC 10582 / VPI-5482 / E50</strain>
    </source>
</reference>
<name>PYRG_BACTN</name>
<keyword id="KW-0067">ATP-binding</keyword>
<keyword id="KW-0315">Glutamine amidotransferase</keyword>
<keyword id="KW-0436">Ligase</keyword>
<keyword id="KW-0460">Magnesium</keyword>
<keyword id="KW-0479">Metal-binding</keyword>
<keyword id="KW-0547">Nucleotide-binding</keyword>
<keyword id="KW-0665">Pyrimidine biosynthesis</keyword>
<keyword id="KW-1185">Reference proteome</keyword>
<evidence type="ECO:0000255" key="1">
    <source>
        <dbReference type="HAMAP-Rule" id="MF_01227"/>
    </source>
</evidence>
<sequence length="537" mass="59864">MGETKYIFVTGGVASSLGKGIISSSIGKLLQARGYNVTIQKFDPYINIDPGTLNPYEHGECYVTVDGHEADLDLGHYERFLGIQTTKANNITTGRIYKSVIDKERRGDYLGKTIQVIPHITDEIKRNVKLLGNKYKFDFVITEIGGTVGDIESLPYLESIRQLKWELGKNALCVHLTYVPYLAAAGELKTKPTQHSVKELQSVGIQPDVLVLRAEHPLSDGLRKKVAQFCNVDDKAVVQSIDAETIYEVPLLMQAQGLDSTILEKMGLPVGETPGLGPWRKFLERRHAAETKEPINIALVGKYDLQDAYKSIREALSQAGTYNDRKVEVHFVNSEKLTDENVAEALKGMAGVMIGPGFGQRGIDGKFVAIKYTRTHDIPTFGICLGMQCIAIEFARNVLGYADADSREMDEKTPHNVIDIMEEQKAITNMGGTMRLGAYECVLQKGSKAYLAYGEEHIQERHRHRYEFNNDYKAQYEAAGMKCVGINPESDLVEIVEIPALKWFIGTQFHPEYSSTVLNPHPLFVAFVKAAIENEKN</sequence>
<gene>
    <name evidence="1" type="primary">pyrG</name>
    <name type="ordered locus">BT_0590</name>
</gene>
<organism>
    <name type="scientific">Bacteroides thetaiotaomicron (strain ATCC 29148 / DSM 2079 / JCM 5827 / CCUG 10774 / NCTC 10582 / VPI-5482 / E50)</name>
    <dbReference type="NCBI Taxonomy" id="226186"/>
    <lineage>
        <taxon>Bacteria</taxon>
        <taxon>Pseudomonadati</taxon>
        <taxon>Bacteroidota</taxon>
        <taxon>Bacteroidia</taxon>
        <taxon>Bacteroidales</taxon>
        <taxon>Bacteroidaceae</taxon>
        <taxon>Bacteroides</taxon>
    </lineage>
</organism>
<comment type="function">
    <text evidence="1">Catalyzes the ATP-dependent amination of UTP to CTP with either L-glutamine or ammonia as the source of nitrogen. Regulates intracellular CTP levels through interactions with the four ribonucleotide triphosphates.</text>
</comment>
<comment type="catalytic activity">
    <reaction evidence="1">
        <text>UTP + L-glutamine + ATP + H2O = CTP + L-glutamate + ADP + phosphate + 2 H(+)</text>
        <dbReference type="Rhea" id="RHEA:26426"/>
        <dbReference type="ChEBI" id="CHEBI:15377"/>
        <dbReference type="ChEBI" id="CHEBI:15378"/>
        <dbReference type="ChEBI" id="CHEBI:29985"/>
        <dbReference type="ChEBI" id="CHEBI:30616"/>
        <dbReference type="ChEBI" id="CHEBI:37563"/>
        <dbReference type="ChEBI" id="CHEBI:43474"/>
        <dbReference type="ChEBI" id="CHEBI:46398"/>
        <dbReference type="ChEBI" id="CHEBI:58359"/>
        <dbReference type="ChEBI" id="CHEBI:456216"/>
        <dbReference type="EC" id="6.3.4.2"/>
    </reaction>
</comment>
<comment type="catalytic activity">
    <reaction evidence="1">
        <text>L-glutamine + H2O = L-glutamate + NH4(+)</text>
        <dbReference type="Rhea" id="RHEA:15889"/>
        <dbReference type="ChEBI" id="CHEBI:15377"/>
        <dbReference type="ChEBI" id="CHEBI:28938"/>
        <dbReference type="ChEBI" id="CHEBI:29985"/>
        <dbReference type="ChEBI" id="CHEBI:58359"/>
    </reaction>
</comment>
<comment type="catalytic activity">
    <reaction evidence="1">
        <text>UTP + NH4(+) + ATP = CTP + ADP + phosphate + 2 H(+)</text>
        <dbReference type="Rhea" id="RHEA:16597"/>
        <dbReference type="ChEBI" id="CHEBI:15378"/>
        <dbReference type="ChEBI" id="CHEBI:28938"/>
        <dbReference type="ChEBI" id="CHEBI:30616"/>
        <dbReference type="ChEBI" id="CHEBI:37563"/>
        <dbReference type="ChEBI" id="CHEBI:43474"/>
        <dbReference type="ChEBI" id="CHEBI:46398"/>
        <dbReference type="ChEBI" id="CHEBI:456216"/>
    </reaction>
</comment>
<comment type="activity regulation">
    <text evidence="1">Allosterically activated by GTP, when glutamine is the substrate; GTP has no effect on the reaction when ammonia is the substrate. The allosteric effector GTP functions by stabilizing the protein conformation that binds the tetrahedral intermediate(s) formed during glutamine hydrolysis. Inhibited by the product CTP, via allosteric rather than competitive inhibition.</text>
</comment>
<comment type="pathway">
    <text evidence="1">Pyrimidine metabolism; CTP biosynthesis via de novo pathway; CTP from UDP: step 2/2.</text>
</comment>
<comment type="subunit">
    <text evidence="1">Homotetramer.</text>
</comment>
<comment type="miscellaneous">
    <text evidence="1">CTPSs have evolved a hybrid strategy for distinguishing between UTP and CTP. The overlapping regions of the product feedback inhibitory and substrate sites recognize a common feature in both compounds, the triphosphate moiety. To differentiate isosteric substrate and product pyrimidine rings, an additional pocket far from the expected kinase/ligase catalytic site, specifically recognizes the cytosine and ribose portions of the product inhibitor.</text>
</comment>
<comment type="similarity">
    <text evidence="1">Belongs to the CTP synthase family.</text>
</comment>
<protein>
    <recommendedName>
        <fullName evidence="1">CTP synthase</fullName>
        <ecNumber evidence="1">6.3.4.2</ecNumber>
    </recommendedName>
    <alternativeName>
        <fullName evidence="1">Cytidine 5'-triphosphate synthase</fullName>
    </alternativeName>
    <alternativeName>
        <fullName evidence="1">Cytidine triphosphate synthetase</fullName>
        <shortName evidence="1">CTP synthetase</shortName>
        <shortName evidence="1">CTPS</shortName>
    </alternativeName>
    <alternativeName>
        <fullName evidence="1">UTP--ammonia ligase</fullName>
    </alternativeName>
</protein>
<proteinExistence type="inferred from homology"/>
<feature type="chain" id="PRO_0000266064" description="CTP synthase">
    <location>
        <begin position="1"/>
        <end position="537"/>
    </location>
</feature>
<feature type="domain" description="Glutamine amidotransferase type-1" evidence="1">
    <location>
        <begin position="296"/>
        <end position="537"/>
    </location>
</feature>
<feature type="region of interest" description="Amidoligase domain" evidence="1">
    <location>
        <begin position="1"/>
        <end position="268"/>
    </location>
</feature>
<feature type="active site" description="Nucleophile; for glutamine hydrolysis" evidence="1">
    <location>
        <position position="384"/>
    </location>
</feature>
<feature type="active site" evidence="1">
    <location>
        <position position="510"/>
    </location>
</feature>
<feature type="active site" evidence="1">
    <location>
        <position position="512"/>
    </location>
</feature>
<feature type="binding site" evidence="1">
    <location>
        <position position="15"/>
    </location>
    <ligand>
        <name>CTP</name>
        <dbReference type="ChEBI" id="CHEBI:37563"/>
        <note>allosteric inhibitor</note>
    </ligand>
</feature>
<feature type="binding site" evidence="1">
    <location>
        <position position="15"/>
    </location>
    <ligand>
        <name>UTP</name>
        <dbReference type="ChEBI" id="CHEBI:46398"/>
    </ligand>
</feature>
<feature type="binding site" evidence="1">
    <location>
        <begin position="16"/>
        <end position="21"/>
    </location>
    <ligand>
        <name>ATP</name>
        <dbReference type="ChEBI" id="CHEBI:30616"/>
    </ligand>
</feature>
<feature type="binding site" evidence="1">
    <location>
        <position position="56"/>
    </location>
    <ligand>
        <name>L-glutamine</name>
        <dbReference type="ChEBI" id="CHEBI:58359"/>
    </ligand>
</feature>
<feature type="binding site" evidence="1">
    <location>
        <position position="73"/>
    </location>
    <ligand>
        <name>ATP</name>
        <dbReference type="ChEBI" id="CHEBI:30616"/>
    </ligand>
</feature>
<feature type="binding site" evidence="1">
    <location>
        <position position="73"/>
    </location>
    <ligand>
        <name>Mg(2+)</name>
        <dbReference type="ChEBI" id="CHEBI:18420"/>
    </ligand>
</feature>
<feature type="binding site" evidence="1">
    <location>
        <position position="143"/>
    </location>
    <ligand>
        <name>Mg(2+)</name>
        <dbReference type="ChEBI" id="CHEBI:18420"/>
    </ligand>
</feature>
<feature type="binding site" evidence="1">
    <location>
        <begin position="150"/>
        <end position="152"/>
    </location>
    <ligand>
        <name>CTP</name>
        <dbReference type="ChEBI" id="CHEBI:37563"/>
        <note>allosteric inhibitor</note>
    </ligand>
</feature>
<feature type="binding site" evidence="1">
    <location>
        <begin position="189"/>
        <end position="194"/>
    </location>
    <ligand>
        <name>CTP</name>
        <dbReference type="ChEBI" id="CHEBI:37563"/>
        <note>allosteric inhibitor</note>
    </ligand>
</feature>
<feature type="binding site" evidence="1">
    <location>
        <begin position="189"/>
        <end position="194"/>
    </location>
    <ligand>
        <name>UTP</name>
        <dbReference type="ChEBI" id="CHEBI:46398"/>
    </ligand>
</feature>
<feature type="binding site" evidence="1">
    <location>
        <position position="225"/>
    </location>
    <ligand>
        <name>CTP</name>
        <dbReference type="ChEBI" id="CHEBI:37563"/>
        <note>allosteric inhibitor</note>
    </ligand>
</feature>
<feature type="binding site" evidence="1">
    <location>
        <position position="225"/>
    </location>
    <ligand>
        <name>UTP</name>
        <dbReference type="ChEBI" id="CHEBI:46398"/>
    </ligand>
</feature>
<feature type="binding site" evidence="1">
    <location>
        <position position="357"/>
    </location>
    <ligand>
        <name>L-glutamine</name>
        <dbReference type="ChEBI" id="CHEBI:58359"/>
    </ligand>
</feature>
<feature type="binding site" evidence="1">
    <location>
        <begin position="385"/>
        <end position="388"/>
    </location>
    <ligand>
        <name>L-glutamine</name>
        <dbReference type="ChEBI" id="CHEBI:58359"/>
    </ligand>
</feature>
<feature type="binding site" evidence="1">
    <location>
        <position position="408"/>
    </location>
    <ligand>
        <name>L-glutamine</name>
        <dbReference type="ChEBI" id="CHEBI:58359"/>
    </ligand>
</feature>
<feature type="binding site" evidence="1">
    <location>
        <position position="465"/>
    </location>
    <ligand>
        <name>L-glutamine</name>
        <dbReference type="ChEBI" id="CHEBI:58359"/>
    </ligand>
</feature>